<keyword id="KW-0002">3D-structure</keyword>
<keyword id="KW-0067">ATP-binding</keyword>
<keyword id="KW-0106">Calcium</keyword>
<keyword id="KW-0968">Cytoplasmic vesicle</keyword>
<keyword id="KW-0472">Membrane</keyword>
<keyword id="KW-0547">Nucleotide-binding</keyword>
<keyword id="KW-0597">Phosphoprotein</keyword>
<keyword id="KW-1267">Proteomics identification</keyword>
<keyword id="KW-1185">Reference proteome</keyword>
<keyword id="KW-0770">Synapse</keyword>
<gene>
    <name type="primary">SYN3</name>
</gene>
<feature type="chain" id="PRO_0000183024" description="Synapsin-3">
    <location>
        <begin position="1"/>
        <end position="580"/>
    </location>
</feature>
<feature type="region of interest" description="A">
    <location>
        <begin position="1"/>
        <end position="28"/>
    </location>
</feature>
<feature type="region of interest" description="Disordered" evidence="4">
    <location>
        <begin position="19"/>
        <end position="56"/>
    </location>
</feature>
<feature type="region of interest" description="B; linker">
    <location>
        <begin position="28"/>
        <end position="90"/>
    </location>
</feature>
<feature type="region of interest" description="C; actin-binding and synaptic-vesicle binding">
    <location>
        <begin position="91"/>
        <end position="399"/>
    </location>
</feature>
<feature type="region of interest" description="Disordered" evidence="4">
    <location>
        <begin position="395"/>
        <end position="567"/>
    </location>
</feature>
<feature type="region of interest" description="J; Pro-rich linker">
    <location>
        <begin position="400"/>
        <end position="531"/>
    </location>
</feature>
<feature type="region of interest" description="E">
    <location>
        <begin position="532"/>
        <end position="580"/>
    </location>
</feature>
<feature type="compositionally biased region" description="Low complexity" evidence="4">
    <location>
        <begin position="30"/>
        <end position="39"/>
    </location>
</feature>
<feature type="compositionally biased region" description="Low complexity" evidence="4">
    <location>
        <begin position="47"/>
        <end position="56"/>
    </location>
</feature>
<feature type="compositionally biased region" description="Low complexity" evidence="4">
    <location>
        <begin position="419"/>
        <end position="432"/>
    </location>
</feature>
<feature type="compositionally biased region" description="Low complexity" evidence="4">
    <location>
        <begin position="441"/>
        <end position="488"/>
    </location>
</feature>
<feature type="compositionally biased region" description="Polar residues" evidence="4">
    <location>
        <begin position="489"/>
        <end position="500"/>
    </location>
</feature>
<feature type="compositionally biased region" description="Low complexity" evidence="4">
    <location>
        <begin position="537"/>
        <end position="553"/>
    </location>
</feature>
<feature type="modified residue" description="Phosphoserine; by PKA and CaMK1" evidence="3">
    <location>
        <position position="9"/>
    </location>
</feature>
<feature type="modified residue" description="Phosphoserine" evidence="3">
    <location>
        <position position="455"/>
    </location>
</feature>
<feature type="modified residue" description="Phosphoserine" evidence="3">
    <location>
        <position position="462"/>
    </location>
</feature>
<feature type="modified residue" description="Phosphoserine; by CDK1 and MAPK" evidence="5">
    <location>
        <position position="470"/>
    </location>
</feature>
<feature type="modified residue" description="Phosphoserine" evidence="3">
    <location>
        <position position="475"/>
    </location>
</feature>
<feature type="modified residue" description="Phosphoserine" evidence="2">
    <location>
        <position position="481"/>
    </location>
</feature>
<feature type="modified residue" description="Phosphoserine" evidence="3">
    <location>
        <position position="484"/>
    </location>
</feature>
<feature type="modified residue" description="Phosphoserine" evidence="3">
    <location>
        <position position="541"/>
    </location>
</feature>
<feature type="sequence variant" id="VAR_068906" description="In patients affected by schizophrenia; dbSNP:rs5998526." evidence="5">
    <original>S</original>
    <variation>N</variation>
    <location>
        <position position="470"/>
    </location>
</feature>
<feature type="strand" evidence="7">
    <location>
        <begin position="92"/>
        <end position="97"/>
    </location>
</feature>
<feature type="helix" evidence="7">
    <location>
        <begin position="104"/>
        <end position="108"/>
    </location>
</feature>
<feature type="turn" evidence="7">
    <location>
        <begin position="114"/>
        <end position="116"/>
    </location>
</feature>
<feature type="strand" evidence="7">
    <location>
        <begin position="117"/>
        <end position="124"/>
    </location>
</feature>
<feature type="helix" evidence="7">
    <location>
        <begin position="126"/>
        <end position="128"/>
    </location>
</feature>
<feature type="strand" evidence="7">
    <location>
        <begin position="129"/>
        <end position="134"/>
    </location>
</feature>
<feature type="strand" evidence="7">
    <location>
        <begin position="139"/>
        <end position="143"/>
    </location>
</feature>
<feature type="strand" evidence="7">
    <location>
        <begin position="160"/>
        <end position="164"/>
    </location>
</feature>
<feature type="strand" evidence="7">
    <location>
        <begin position="168"/>
        <end position="170"/>
    </location>
</feature>
<feature type="helix" evidence="7">
    <location>
        <begin position="171"/>
        <end position="173"/>
    </location>
</feature>
<feature type="helix" evidence="7">
    <location>
        <begin position="178"/>
        <end position="186"/>
    </location>
</feature>
<feature type="strand" evidence="7">
    <location>
        <begin position="191"/>
        <end position="193"/>
    </location>
</feature>
<feature type="helix" evidence="7">
    <location>
        <begin position="195"/>
        <end position="200"/>
    </location>
</feature>
<feature type="helix" evidence="7">
    <location>
        <begin position="204"/>
        <end position="218"/>
    </location>
</feature>
<feature type="turn" evidence="7">
    <location>
        <begin position="220"/>
        <end position="222"/>
    </location>
</feature>
<feature type="strand" evidence="7">
    <location>
        <begin position="229"/>
        <end position="234"/>
    </location>
</feature>
<feature type="strand" evidence="7">
    <location>
        <begin position="241"/>
        <end position="251"/>
    </location>
</feature>
<feature type="turn" evidence="7">
    <location>
        <begin position="254"/>
        <end position="257"/>
    </location>
</feature>
<feature type="strand" evidence="7">
    <location>
        <begin position="258"/>
        <end position="261"/>
    </location>
</feature>
<feature type="helix" evidence="7">
    <location>
        <begin position="264"/>
        <end position="277"/>
    </location>
</feature>
<feature type="strand" evidence="7">
    <location>
        <begin position="281"/>
        <end position="285"/>
    </location>
</feature>
<feature type="strand" evidence="7">
    <location>
        <begin position="289"/>
        <end position="298"/>
    </location>
</feature>
<feature type="strand" evidence="7">
    <location>
        <begin position="301"/>
        <end position="312"/>
    </location>
</feature>
<feature type="strand" evidence="7">
    <location>
        <begin position="318"/>
        <end position="326"/>
    </location>
</feature>
<feature type="helix" evidence="7">
    <location>
        <begin position="330"/>
        <end position="339"/>
    </location>
</feature>
<feature type="helix" evidence="7">
    <location>
        <begin position="340"/>
        <end position="344"/>
    </location>
</feature>
<feature type="strand" evidence="7">
    <location>
        <begin position="347"/>
        <end position="356"/>
    </location>
</feature>
<feature type="strand" evidence="7">
    <location>
        <begin position="361"/>
        <end position="367"/>
    </location>
</feature>
<feature type="helix" evidence="7">
    <location>
        <begin position="375"/>
        <end position="377"/>
    </location>
</feature>
<feature type="helix" evidence="7">
    <location>
        <begin position="378"/>
        <end position="394"/>
    </location>
</feature>
<reference key="1">
    <citation type="journal article" date="1998" name="Proc. Natl. Acad. Sci. U.S.A.">
        <title>A third member of the synapsin gene family.</title>
        <authorList>
            <person name="Kao H.-T."/>
            <person name="Porton B."/>
            <person name="Czernik A.J."/>
            <person name="Feng J."/>
            <person name="Yiu G."/>
            <person name="Haering M."/>
            <person name="Benfenati F."/>
            <person name="Greengard P."/>
        </authorList>
    </citation>
    <scope>NUCLEOTIDE SEQUENCE [MRNA]</scope>
</reference>
<reference key="2">
    <citation type="journal article" date="2004" name="Genome Biol.">
        <title>A genome annotation-driven approach to cloning the human ORFeome.</title>
        <authorList>
            <person name="Collins J.E."/>
            <person name="Wright C.L."/>
            <person name="Edwards C.A."/>
            <person name="Davis M.P."/>
            <person name="Grinham J.A."/>
            <person name="Cole C.G."/>
            <person name="Goward M.E."/>
            <person name="Aguado B."/>
            <person name="Mallya M."/>
            <person name="Mokrab Y."/>
            <person name="Huckle E.J."/>
            <person name="Beare D.M."/>
            <person name="Dunham I."/>
        </authorList>
    </citation>
    <scope>NUCLEOTIDE SEQUENCE [LARGE SCALE MRNA]</scope>
</reference>
<reference key="3">
    <citation type="journal article" date="1999" name="Nature">
        <title>The DNA sequence of human chromosome 22.</title>
        <authorList>
            <person name="Dunham I."/>
            <person name="Hunt A.R."/>
            <person name="Collins J.E."/>
            <person name="Bruskiewich R."/>
            <person name="Beare D.M."/>
            <person name="Clamp M."/>
            <person name="Smink L.J."/>
            <person name="Ainscough R."/>
            <person name="Almeida J.P."/>
            <person name="Babbage A.K."/>
            <person name="Bagguley C."/>
            <person name="Bailey J."/>
            <person name="Barlow K.F."/>
            <person name="Bates K.N."/>
            <person name="Beasley O.P."/>
            <person name="Bird C.P."/>
            <person name="Blakey S.E."/>
            <person name="Bridgeman A.M."/>
            <person name="Buck D."/>
            <person name="Burgess J."/>
            <person name="Burrill W.D."/>
            <person name="Burton J."/>
            <person name="Carder C."/>
            <person name="Carter N.P."/>
            <person name="Chen Y."/>
            <person name="Clark G."/>
            <person name="Clegg S.M."/>
            <person name="Cobley V.E."/>
            <person name="Cole C.G."/>
            <person name="Collier R.E."/>
            <person name="Connor R."/>
            <person name="Conroy D."/>
            <person name="Corby N.R."/>
            <person name="Coville G.J."/>
            <person name="Cox A.V."/>
            <person name="Davis J."/>
            <person name="Dawson E."/>
            <person name="Dhami P.D."/>
            <person name="Dockree C."/>
            <person name="Dodsworth S.J."/>
            <person name="Durbin R.M."/>
            <person name="Ellington A.G."/>
            <person name="Evans K.L."/>
            <person name="Fey J.M."/>
            <person name="Fleming K."/>
            <person name="French L."/>
            <person name="Garner A.A."/>
            <person name="Gilbert J.G.R."/>
            <person name="Goward M.E."/>
            <person name="Grafham D.V."/>
            <person name="Griffiths M.N.D."/>
            <person name="Hall C."/>
            <person name="Hall R.E."/>
            <person name="Hall-Tamlyn G."/>
            <person name="Heathcott R.W."/>
            <person name="Ho S."/>
            <person name="Holmes S."/>
            <person name="Hunt S.E."/>
            <person name="Jones M.C."/>
            <person name="Kershaw J."/>
            <person name="Kimberley A.M."/>
            <person name="King A."/>
            <person name="Laird G.K."/>
            <person name="Langford C.F."/>
            <person name="Leversha M.A."/>
            <person name="Lloyd C."/>
            <person name="Lloyd D.M."/>
            <person name="Martyn I.D."/>
            <person name="Mashreghi-Mohammadi M."/>
            <person name="Matthews L.H."/>
            <person name="Mccann O.T."/>
            <person name="Mcclay J."/>
            <person name="Mclaren S."/>
            <person name="McMurray A.A."/>
            <person name="Milne S.A."/>
            <person name="Mortimore B.J."/>
            <person name="Odell C.N."/>
            <person name="Pavitt R."/>
            <person name="Pearce A.V."/>
            <person name="Pearson D."/>
            <person name="Phillimore B.J.C.T."/>
            <person name="Phillips S.H."/>
            <person name="Plumb R.W."/>
            <person name="Ramsay H."/>
            <person name="Ramsey Y."/>
            <person name="Rogers L."/>
            <person name="Ross M.T."/>
            <person name="Scott C.E."/>
            <person name="Sehra H.K."/>
            <person name="Skuce C.D."/>
            <person name="Smalley S."/>
            <person name="Smith M.L."/>
            <person name="Soderlund C."/>
            <person name="Spragon L."/>
            <person name="Steward C.A."/>
            <person name="Sulston J.E."/>
            <person name="Swann R.M."/>
            <person name="Vaudin M."/>
            <person name="Wall M."/>
            <person name="Wallis J.M."/>
            <person name="Whiteley M.N."/>
            <person name="Willey D.L."/>
            <person name="Williams L."/>
            <person name="Williams S.A."/>
            <person name="Williamson H."/>
            <person name="Wilmer T.E."/>
            <person name="Wilming L."/>
            <person name="Wright C.L."/>
            <person name="Hubbard T."/>
            <person name="Bentley D.R."/>
            <person name="Beck S."/>
            <person name="Rogers J."/>
            <person name="Shimizu N."/>
            <person name="Minoshima S."/>
            <person name="Kawasaki K."/>
            <person name="Sasaki T."/>
            <person name="Asakawa S."/>
            <person name="Kudoh J."/>
            <person name="Shintani A."/>
            <person name="Shibuya K."/>
            <person name="Yoshizaki Y."/>
            <person name="Aoki N."/>
            <person name="Mitsuyama S."/>
            <person name="Roe B.A."/>
            <person name="Chen F."/>
            <person name="Chu L."/>
            <person name="Crabtree J."/>
            <person name="Deschamps S."/>
            <person name="Do A."/>
            <person name="Do T."/>
            <person name="Dorman A."/>
            <person name="Fang F."/>
            <person name="Fu Y."/>
            <person name="Hu P."/>
            <person name="Hua A."/>
            <person name="Kenton S."/>
            <person name="Lai H."/>
            <person name="Lao H.I."/>
            <person name="Lewis J."/>
            <person name="Lewis S."/>
            <person name="Lin S.-P."/>
            <person name="Loh P."/>
            <person name="Malaj E."/>
            <person name="Nguyen T."/>
            <person name="Pan H."/>
            <person name="Phan S."/>
            <person name="Qi S."/>
            <person name="Qian Y."/>
            <person name="Ray L."/>
            <person name="Ren Q."/>
            <person name="Shaull S."/>
            <person name="Sloan D."/>
            <person name="Song L."/>
            <person name="Wang Q."/>
            <person name="Wang Y."/>
            <person name="Wang Z."/>
            <person name="White J."/>
            <person name="Willingham D."/>
            <person name="Wu H."/>
            <person name="Yao Z."/>
            <person name="Zhan M."/>
            <person name="Zhang G."/>
            <person name="Chissoe S."/>
            <person name="Murray J."/>
            <person name="Miller N."/>
            <person name="Minx P."/>
            <person name="Fulton R."/>
            <person name="Johnson D."/>
            <person name="Bemis G."/>
            <person name="Bentley D."/>
            <person name="Bradshaw H."/>
            <person name="Bourne S."/>
            <person name="Cordes M."/>
            <person name="Du Z."/>
            <person name="Fulton L."/>
            <person name="Goela D."/>
            <person name="Graves T."/>
            <person name="Hawkins J."/>
            <person name="Hinds K."/>
            <person name="Kemp K."/>
            <person name="Latreille P."/>
            <person name="Layman D."/>
            <person name="Ozersky P."/>
            <person name="Rohlfing T."/>
            <person name="Scheet P."/>
            <person name="Walker C."/>
            <person name="Wamsley A."/>
            <person name="Wohldmann P."/>
            <person name="Pepin K."/>
            <person name="Nelson J."/>
            <person name="Korf I."/>
            <person name="Bedell J.A."/>
            <person name="Hillier L.W."/>
            <person name="Mardis E."/>
            <person name="Waterston R."/>
            <person name="Wilson R."/>
            <person name="Emanuel B.S."/>
            <person name="Shaikh T."/>
            <person name="Kurahashi H."/>
            <person name="Saitta S."/>
            <person name="Budarf M.L."/>
            <person name="McDermid H.E."/>
            <person name="Johnson A."/>
            <person name="Wong A.C.C."/>
            <person name="Morrow B.E."/>
            <person name="Edelmann L."/>
            <person name="Kim U.J."/>
            <person name="Shizuya H."/>
            <person name="Simon M.I."/>
            <person name="Dumanski J.P."/>
            <person name="Peyrard M."/>
            <person name="Kedra D."/>
            <person name="Seroussi E."/>
            <person name="Fransson I."/>
            <person name="Tapia I."/>
            <person name="Bruder C.E."/>
            <person name="O'Brien K.P."/>
            <person name="Wilkinson P."/>
            <person name="Bodenteich A."/>
            <person name="Hartman K."/>
            <person name="Hu X."/>
            <person name="Khan A.S."/>
            <person name="Lane L."/>
            <person name="Tilahun Y."/>
            <person name="Wright H."/>
        </authorList>
    </citation>
    <scope>NUCLEOTIDE SEQUENCE [LARGE SCALE GENOMIC DNA]</scope>
</reference>
<reference key="4">
    <citation type="submission" date="2005-07" db="EMBL/GenBank/DDBJ databases">
        <authorList>
            <person name="Mural R.J."/>
            <person name="Istrail S."/>
            <person name="Sutton G."/>
            <person name="Florea L."/>
            <person name="Halpern A.L."/>
            <person name="Mobarry C.M."/>
            <person name="Lippert R."/>
            <person name="Walenz B."/>
            <person name="Shatkay H."/>
            <person name="Dew I."/>
            <person name="Miller J.R."/>
            <person name="Flanigan M.J."/>
            <person name="Edwards N.J."/>
            <person name="Bolanos R."/>
            <person name="Fasulo D."/>
            <person name="Halldorsson B.V."/>
            <person name="Hannenhalli S."/>
            <person name="Turner R."/>
            <person name="Yooseph S."/>
            <person name="Lu F."/>
            <person name="Nusskern D.R."/>
            <person name="Shue B.C."/>
            <person name="Zheng X.H."/>
            <person name="Zhong F."/>
            <person name="Delcher A.L."/>
            <person name="Huson D.H."/>
            <person name="Kravitz S.A."/>
            <person name="Mouchard L."/>
            <person name="Reinert K."/>
            <person name="Remington K.A."/>
            <person name="Clark A.G."/>
            <person name="Waterman M.S."/>
            <person name="Eichler E.E."/>
            <person name="Adams M.D."/>
            <person name="Hunkapiller M.W."/>
            <person name="Myers E.W."/>
            <person name="Venter J.C."/>
        </authorList>
    </citation>
    <scope>NUCLEOTIDE SEQUENCE [LARGE SCALE GENOMIC DNA]</scope>
</reference>
<reference key="5">
    <citation type="journal article" date="2004" name="Genome Res.">
        <title>The status, quality, and expansion of the NIH full-length cDNA project: the Mammalian Gene Collection (MGC).</title>
        <authorList>
            <consortium name="The MGC Project Team"/>
        </authorList>
    </citation>
    <scope>NUCLEOTIDE SEQUENCE [LARGE SCALE MRNA]</scope>
    <source>
        <tissue>Brain</tissue>
    </source>
</reference>
<reference key="6">
    <citation type="journal article" date="2004" name="Biol. Psychiatry">
        <title>A rare polymorphism affects a mitogen-activated protein kinase site in synapsin III: possible relationship to schizophrenia.</title>
        <authorList>
            <person name="Porton B."/>
            <person name="Ferreira A."/>
            <person name="DeLisi L.E."/>
            <person name="Kao H.T."/>
        </authorList>
    </citation>
    <scope>PHOSPHORYLATION AT SER-470</scope>
    <scope>VARIANT ASN-470</scope>
</reference>
<dbReference type="EMBL" id="AF046873">
    <property type="protein sequence ID" value="AAC15101.1"/>
    <property type="molecule type" value="mRNA"/>
</dbReference>
<dbReference type="EMBL" id="CR456589">
    <property type="protein sequence ID" value="CAG30475.1"/>
    <property type="molecule type" value="mRNA"/>
</dbReference>
<dbReference type="EMBL" id="Z83846">
    <property type="status" value="NOT_ANNOTATED_CDS"/>
    <property type="molecule type" value="Genomic_DNA"/>
</dbReference>
<dbReference type="EMBL" id="Z71183">
    <property type="status" value="NOT_ANNOTATED_CDS"/>
    <property type="molecule type" value="Genomic_DNA"/>
</dbReference>
<dbReference type="EMBL" id="Z98256">
    <property type="status" value="NOT_ANNOTATED_CDS"/>
    <property type="molecule type" value="Genomic_DNA"/>
</dbReference>
<dbReference type="EMBL" id="Z82181">
    <property type="status" value="NOT_ANNOTATED_CDS"/>
    <property type="molecule type" value="Genomic_DNA"/>
</dbReference>
<dbReference type="EMBL" id="Z82246">
    <property type="status" value="NOT_ANNOTATED_CDS"/>
    <property type="molecule type" value="Genomic_DNA"/>
</dbReference>
<dbReference type="EMBL" id="Z80902">
    <property type="status" value="NOT_ANNOTATED_CDS"/>
    <property type="molecule type" value="Genomic_DNA"/>
</dbReference>
<dbReference type="EMBL" id="CH471095">
    <property type="protein sequence ID" value="EAW60034.1"/>
    <property type="molecule type" value="Genomic_DNA"/>
</dbReference>
<dbReference type="EMBL" id="BC075065">
    <property type="protein sequence ID" value="AAH75065.1"/>
    <property type="molecule type" value="mRNA"/>
</dbReference>
<dbReference type="EMBL" id="BC075066">
    <property type="protein sequence ID" value="AAH75066.1"/>
    <property type="molecule type" value="mRNA"/>
</dbReference>
<dbReference type="EMBL" id="BC143874">
    <property type="protein sequence ID" value="AAI43875.1"/>
    <property type="molecule type" value="mRNA"/>
</dbReference>
<dbReference type="CCDS" id="CCDS13908.1"/>
<dbReference type="RefSeq" id="NP_001356836.1">
    <property type="nucleotide sequence ID" value="NM_001369907.1"/>
</dbReference>
<dbReference type="RefSeq" id="NP_001356837.1">
    <property type="nucleotide sequence ID" value="NM_001369908.1"/>
</dbReference>
<dbReference type="RefSeq" id="NP_003481.3">
    <property type="nucleotide sequence ID" value="NM_003490.3"/>
</dbReference>
<dbReference type="RefSeq" id="NP_598344.2">
    <property type="nucleotide sequence ID" value="NM_133633.2"/>
</dbReference>
<dbReference type="RefSeq" id="XP_011528707.1">
    <property type="nucleotide sequence ID" value="XM_011530405.4"/>
</dbReference>
<dbReference type="RefSeq" id="XP_011528708.1">
    <property type="nucleotide sequence ID" value="XM_011530406.2"/>
</dbReference>
<dbReference type="RefSeq" id="XP_011528709.1">
    <property type="nucleotide sequence ID" value="XM_011530407.2"/>
</dbReference>
<dbReference type="RefSeq" id="XP_011528710.1">
    <property type="nucleotide sequence ID" value="XM_011530408.1"/>
</dbReference>
<dbReference type="RefSeq" id="XP_016884449.1">
    <property type="nucleotide sequence ID" value="XM_017028960.1"/>
</dbReference>
<dbReference type="RefSeq" id="XP_016884450.1">
    <property type="nucleotide sequence ID" value="XM_017028961.3"/>
</dbReference>
<dbReference type="RefSeq" id="XP_016884451.1">
    <property type="nucleotide sequence ID" value="XM_017028962.3"/>
</dbReference>
<dbReference type="RefSeq" id="XP_016884452.1">
    <property type="nucleotide sequence ID" value="XM_017028963.3"/>
</dbReference>
<dbReference type="RefSeq" id="XP_054181953.1">
    <property type="nucleotide sequence ID" value="XM_054325978.1"/>
</dbReference>
<dbReference type="RefSeq" id="XP_054181954.1">
    <property type="nucleotide sequence ID" value="XM_054325979.1"/>
</dbReference>
<dbReference type="RefSeq" id="XP_054181955.1">
    <property type="nucleotide sequence ID" value="XM_054325980.1"/>
</dbReference>
<dbReference type="RefSeq" id="XP_054181956.1">
    <property type="nucleotide sequence ID" value="XM_054325981.1"/>
</dbReference>
<dbReference type="PDB" id="2P0A">
    <property type="method" value="X-ray"/>
    <property type="resolution" value="1.90 A"/>
    <property type="chains" value="A/B=76-417"/>
</dbReference>
<dbReference type="PDBsum" id="2P0A"/>
<dbReference type="SMR" id="O14994"/>
<dbReference type="BioGRID" id="113857">
    <property type="interactions" value="13"/>
</dbReference>
<dbReference type="FunCoup" id="O14994">
    <property type="interactions" value="141"/>
</dbReference>
<dbReference type="IntAct" id="O14994">
    <property type="interactions" value="6"/>
</dbReference>
<dbReference type="STRING" id="9606.ENSP00000351614"/>
<dbReference type="GlyGen" id="O14994">
    <property type="glycosylation" value="1 site, 1 O-linked glycan (1 site)"/>
</dbReference>
<dbReference type="iPTMnet" id="O14994"/>
<dbReference type="PhosphoSitePlus" id="O14994"/>
<dbReference type="BioMuta" id="SYN3"/>
<dbReference type="jPOST" id="O14994"/>
<dbReference type="MassIVE" id="O14994"/>
<dbReference type="PaxDb" id="9606-ENSP00000351614"/>
<dbReference type="PeptideAtlas" id="O14994"/>
<dbReference type="ProteomicsDB" id="48363"/>
<dbReference type="ABCD" id="O14994">
    <property type="antibodies" value="2 sequenced antibodies"/>
</dbReference>
<dbReference type="Antibodypedia" id="25287">
    <property type="antibodies" value="128 antibodies from 21 providers"/>
</dbReference>
<dbReference type="DNASU" id="8224"/>
<dbReference type="Ensembl" id="ENST00000358763.7">
    <property type="protein sequence ID" value="ENSP00000351614.2"/>
    <property type="gene ID" value="ENSG00000185666.16"/>
</dbReference>
<dbReference type="GeneID" id="8224"/>
<dbReference type="KEGG" id="hsa:8224"/>
<dbReference type="MANE-Select" id="ENST00000358763.7">
    <property type="protein sequence ID" value="ENSP00000351614.2"/>
    <property type="RefSeq nucleotide sequence ID" value="NM_003490.4"/>
    <property type="RefSeq protein sequence ID" value="NP_003481.3"/>
</dbReference>
<dbReference type="UCSC" id="uc003amx.4">
    <property type="organism name" value="human"/>
</dbReference>
<dbReference type="AGR" id="HGNC:11496"/>
<dbReference type="CTD" id="8224"/>
<dbReference type="DisGeNET" id="8224"/>
<dbReference type="GeneCards" id="SYN3"/>
<dbReference type="HGNC" id="HGNC:11496">
    <property type="gene designation" value="SYN3"/>
</dbReference>
<dbReference type="HPA" id="ENSG00000185666">
    <property type="expression patterns" value="Tissue enhanced (brain)"/>
</dbReference>
<dbReference type="MalaCards" id="SYN3"/>
<dbReference type="MIM" id="602705">
    <property type="type" value="gene"/>
</dbReference>
<dbReference type="neXtProt" id="NX_O14994"/>
<dbReference type="OpenTargets" id="ENSG00000185666"/>
<dbReference type="PharmGKB" id="PA36278"/>
<dbReference type="VEuPathDB" id="HostDB:ENSG00000185666"/>
<dbReference type="eggNOG" id="KOG3895">
    <property type="taxonomic scope" value="Eukaryota"/>
</dbReference>
<dbReference type="GeneTree" id="ENSGT00940000155415"/>
<dbReference type="HOGENOM" id="CLU_010582_3_0_1"/>
<dbReference type="InParanoid" id="O14994"/>
<dbReference type="OMA" id="IGSAYKC"/>
<dbReference type="OrthoDB" id="10249572at2759"/>
<dbReference type="PAN-GO" id="O14994">
    <property type="GO annotations" value="2 GO annotations based on evolutionary models"/>
</dbReference>
<dbReference type="PhylomeDB" id="O14994"/>
<dbReference type="TreeFam" id="TF319919"/>
<dbReference type="PathwayCommons" id="O14994"/>
<dbReference type="Reactome" id="R-HSA-181429">
    <property type="pathway name" value="Serotonin Neurotransmitter Release Cycle"/>
</dbReference>
<dbReference type="Reactome" id="R-HSA-212676">
    <property type="pathway name" value="Dopamine Neurotransmitter Release Cycle"/>
</dbReference>
<dbReference type="SignaLink" id="O14994"/>
<dbReference type="SIGNOR" id="O14994"/>
<dbReference type="BioGRID-ORCS" id="8224">
    <property type="hits" value="10 hits in 1148 CRISPR screens"/>
</dbReference>
<dbReference type="CD-CODE" id="FB4E32DD">
    <property type="entry name" value="Presynaptic clusters and postsynaptic densities"/>
</dbReference>
<dbReference type="ChiTaRS" id="SYN3">
    <property type="organism name" value="human"/>
</dbReference>
<dbReference type="EvolutionaryTrace" id="O14994"/>
<dbReference type="GeneWiki" id="SYN3"/>
<dbReference type="GenomeRNAi" id="8224"/>
<dbReference type="Pharos" id="O14994">
    <property type="development level" value="Tbio"/>
</dbReference>
<dbReference type="PRO" id="PR:O14994"/>
<dbReference type="Proteomes" id="UP000005640">
    <property type="component" value="Chromosome 22"/>
</dbReference>
<dbReference type="RNAct" id="O14994">
    <property type="molecule type" value="protein"/>
</dbReference>
<dbReference type="Bgee" id="ENSG00000185666">
    <property type="expression patterns" value="Expressed in primordial germ cell in gonad and 119 other cell types or tissues"/>
</dbReference>
<dbReference type="ExpressionAtlas" id="O14994">
    <property type="expression patterns" value="baseline and differential"/>
</dbReference>
<dbReference type="GO" id="GO:0098850">
    <property type="term" value="C:extrinsic component of synaptic vesicle membrane"/>
    <property type="evidence" value="ECO:0007669"/>
    <property type="project" value="Ensembl"/>
</dbReference>
<dbReference type="GO" id="GO:0098978">
    <property type="term" value="C:glutamatergic synapse"/>
    <property type="evidence" value="ECO:0007669"/>
    <property type="project" value="Ensembl"/>
</dbReference>
<dbReference type="GO" id="GO:0014069">
    <property type="term" value="C:postsynaptic density"/>
    <property type="evidence" value="ECO:0007669"/>
    <property type="project" value="Ensembl"/>
</dbReference>
<dbReference type="GO" id="GO:0008021">
    <property type="term" value="C:synaptic vesicle"/>
    <property type="evidence" value="ECO:0000304"/>
    <property type="project" value="ProtInc"/>
</dbReference>
<dbReference type="GO" id="GO:0030672">
    <property type="term" value="C:synaptic vesicle membrane"/>
    <property type="evidence" value="ECO:0000318"/>
    <property type="project" value="GO_Central"/>
</dbReference>
<dbReference type="GO" id="GO:0005524">
    <property type="term" value="F:ATP binding"/>
    <property type="evidence" value="ECO:0000304"/>
    <property type="project" value="ParkinsonsUK-UCL"/>
</dbReference>
<dbReference type="GO" id="GO:0007269">
    <property type="term" value="P:neurotransmitter secretion"/>
    <property type="evidence" value="ECO:0000304"/>
    <property type="project" value="ProtInc"/>
</dbReference>
<dbReference type="GO" id="GO:0032228">
    <property type="term" value="P:regulation of synaptic transmission, GABAergic"/>
    <property type="evidence" value="ECO:0000304"/>
    <property type="project" value="ParkinsonsUK-UCL"/>
</dbReference>
<dbReference type="GO" id="GO:0050808">
    <property type="term" value="P:synapse organization"/>
    <property type="evidence" value="ECO:0000318"/>
    <property type="project" value="GO_Central"/>
</dbReference>
<dbReference type="GO" id="GO:0097091">
    <property type="term" value="P:synaptic vesicle clustering"/>
    <property type="evidence" value="ECO:0000318"/>
    <property type="project" value="GO_Central"/>
</dbReference>
<dbReference type="FunFam" id="3.30.1490.20:FF:000008">
    <property type="entry name" value="Synapsin I"/>
    <property type="match status" value="1"/>
</dbReference>
<dbReference type="FunFam" id="3.30.470.20:FF:000042">
    <property type="entry name" value="Synapsin III"/>
    <property type="match status" value="1"/>
</dbReference>
<dbReference type="FunFam" id="3.40.50.20:FF:000008">
    <property type="entry name" value="Synapsin III"/>
    <property type="match status" value="1"/>
</dbReference>
<dbReference type="Gene3D" id="3.40.50.20">
    <property type="match status" value="1"/>
</dbReference>
<dbReference type="Gene3D" id="3.30.1490.20">
    <property type="entry name" value="ATP-grasp fold, A domain"/>
    <property type="match status" value="1"/>
</dbReference>
<dbReference type="Gene3D" id="3.30.470.20">
    <property type="entry name" value="ATP-grasp fold, B domain"/>
    <property type="match status" value="1"/>
</dbReference>
<dbReference type="InterPro" id="IPR013815">
    <property type="entry name" value="ATP_grasp_subdomain_1"/>
</dbReference>
<dbReference type="InterPro" id="IPR016185">
    <property type="entry name" value="PreATP-grasp_dom_sf"/>
</dbReference>
<dbReference type="InterPro" id="IPR001359">
    <property type="entry name" value="Synapsin"/>
</dbReference>
<dbReference type="InterPro" id="IPR020898">
    <property type="entry name" value="Synapsin_ATP-bd_dom"/>
</dbReference>
<dbReference type="InterPro" id="IPR019735">
    <property type="entry name" value="Synapsin_CS"/>
</dbReference>
<dbReference type="InterPro" id="IPR019736">
    <property type="entry name" value="Synapsin_P_site"/>
</dbReference>
<dbReference type="InterPro" id="IPR020897">
    <property type="entry name" value="Synapsin_pre-ATP-grasp_dom"/>
</dbReference>
<dbReference type="PANTHER" id="PTHR10841">
    <property type="entry name" value="SYNAPSIN"/>
    <property type="match status" value="1"/>
</dbReference>
<dbReference type="PANTHER" id="PTHR10841:SF27">
    <property type="entry name" value="SYNAPSIN-3"/>
    <property type="match status" value="1"/>
</dbReference>
<dbReference type="Pfam" id="PF02078">
    <property type="entry name" value="Synapsin"/>
    <property type="match status" value="1"/>
</dbReference>
<dbReference type="Pfam" id="PF02750">
    <property type="entry name" value="Synapsin_C"/>
    <property type="match status" value="1"/>
</dbReference>
<dbReference type="Pfam" id="PF10581">
    <property type="entry name" value="Synapsin_N"/>
    <property type="match status" value="1"/>
</dbReference>
<dbReference type="PRINTS" id="PR01368">
    <property type="entry name" value="SYNAPSIN"/>
</dbReference>
<dbReference type="SUPFAM" id="SSF56059">
    <property type="entry name" value="Glutathione synthetase ATP-binding domain-like"/>
    <property type="match status" value="1"/>
</dbReference>
<dbReference type="SUPFAM" id="SSF52440">
    <property type="entry name" value="PreATP-grasp domain"/>
    <property type="match status" value="1"/>
</dbReference>
<dbReference type="PROSITE" id="PS00415">
    <property type="entry name" value="SYNAPSIN_1"/>
    <property type="match status" value="1"/>
</dbReference>
<dbReference type="PROSITE" id="PS00416">
    <property type="entry name" value="SYNAPSIN_2"/>
    <property type="match status" value="1"/>
</dbReference>
<accession>O14994</accession>
<accession>B1B1F9</accession>
<proteinExistence type="evidence at protein level"/>
<evidence type="ECO:0000250" key="1"/>
<evidence type="ECO:0000250" key="2">
    <source>
        <dbReference type="UniProtKB" id="O70441"/>
    </source>
</evidence>
<evidence type="ECO:0000250" key="3">
    <source>
        <dbReference type="UniProtKB" id="Q8JZP2"/>
    </source>
</evidence>
<evidence type="ECO:0000256" key="4">
    <source>
        <dbReference type="SAM" id="MobiDB-lite"/>
    </source>
</evidence>
<evidence type="ECO:0000269" key="5">
    <source>
    </source>
</evidence>
<evidence type="ECO:0000305" key="6"/>
<evidence type="ECO:0007829" key="7">
    <source>
        <dbReference type="PDB" id="2P0A"/>
    </source>
</evidence>
<name>SYN3_HUMAN</name>
<protein>
    <recommendedName>
        <fullName>Synapsin-3</fullName>
    </recommendedName>
    <alternativeName>
        <fullName>Synapsin III</fullName>
    </alternativeName>
</protein>
<comment type="function">
    <text>May be involved in the regulation of neurotransmitter release and synaptogenesis.</text>
</comment>
<comment type="subunit">
    <text evidence="1">Interacts with CAPON.</text>
</comment>
<comment type="subcellular location">
    <subcellularLocation>
        <location>Cytoplasmic vesicle</location>
        <location>Secretory vesicle</location>
        <location>Synaptic vesicle membrane</location>
        <topology>Peripheral membrane protein</topology>
        <orientation>Cytoplasmic side</orientation>
    </subcellularLocation>
    <text>Peripheral membrane protein localized to the cytoplasmic surface of synaptic vesicles.</text>
</comment>
<comment type="tissue specificity">
    <text>Neuron specific. Detected predominantly in brain.</text>
</comment>
<comment type="domain">
    <text evidence="1">The A region binds phospholipids with a preference for negatively charged species.</text>
</comment>
<comment type="PTM">
    <text evidence="1">Phosphorylation at Ser-9 dissociates synapsins from synaptic vesicles.</text>
</comment>
<comment type="miscellaneous">
    <text>Regulated by calcium. Calcium inhibits ATP binding to the C-domain.</text>
</comment>
<comment type="similarity">
    <text evidence="6">Belongs to the synapsin family.</text>
</comment>
<organism>
    <name type="scientific">Homo sapiens</name>
    <name type="common">Human</name>
    <dbReference type="NCBI Taxonomy" id="9606"/>
    <lineage>
        <taxon>Eukaryota</taxon>
        <taxon>Metazoa</taxon>
        <taxon>Chordata</taxon>
        <taxon>Craniata</taxon>
        <taxon>Vertebrata</taxon>
        <taxon>Euteleostomi</taxon>
        <taxon>Mammalia</taxon>
        <taxon>Eutheria</taxon>
        <taxon>Euarchontoglires</taxon>
        <taxon>Primates</taxon>
        <taxon>Haplorrhini</taxon>
        <taxon>Catarrhini</taxon>
        <taxon>Hominidae</taxon>
        <taxon>Homo</taxon>
    </lineage>
</organism>
<sequence length="580" mass="63303">MNFLRRRLSDSSFMANLPNGYMTDLQRPDSSTSSPASPAMERRHPQPLAASFSSPGSSLFSSLSSAMKQAPQATSGLMEPPGPSTPIVQRPRILLVIDDAHTDWSKYFHGKKVNGEIEIRVEQAEFSELNLAAYVTGGCMVDMQVVRNGTKVVSRSFKPDFILVRQHAYSMALGEDYRSLVIGLQYGGLPAVNSLYSVYNFCSKPWVFSQLIKIFHSLGPEKFPLVEQTFFPNHKPMVTAPHFPVVVKLGHAHAGMGKIKVENQLDFQDITSVVAMAKTYATTEAFIDSKYDIRIQKIGSNYKAYMRTSISGNWKANTGSAMLEQVAMTERYRLWVDSCSEMFGGLDICAVKAVHSKDGRDYIIEVMDSSMPLIGEHVEEDRQLMADLVVSKMSQLPMPGGTAPSPLRPWAPQIKSAKSPGQAQLGPQLGQPQPRPPPQGGPRQAQSPQPQRSGSPSQQRLSPQGQQPLSPQSGSPQQQRSPGSPQLSRASSGSSPNQASKPGATLASQPRPPVQGRSTSQQGEESKKPAPPHPHLNKSQSLTNSLSTSDTSQRGTPSEDEAKAETIRNLRKSFASLFSD</sequence>